<sequence>MPVITLPDGSQRHYDHAVSPMDVALDIGPGLAKACIAGRVNGELVDACDLIENDAQLSIITAKDEEGLEIIRHSCAHLLGHAIKQLWPHTKMAIGPVIDNGFYYDVDLDRTLTQEDVEALEKRMHELAEKNYDVIKKKVSWHEARETFANRGESYKVSILDENIAHDDKPGLYFHEEYVDMCRGPHVPNMRFCHHFKLMKTAGAYWRGDSNNKMLQRIYGTAWADKKALNAYLQRLEEAAKRDHRKIGKQLDLYHMQEEAPGMVFWHNDGWTIFRELEVFVRSKLKEYQYQEVKGPFMMDRVLWEKTGHWDNYKDAMFTTSSENREYCIKPMNCPGHVQIFNQGLKSYRDLPLRMAEFGSCHRNEPSGSLHGLMRVRGFTQDDAHIFCTEEQIRDEVNGCIRLVYDMYSTFGFEKIVVKLSTRPEKRIGSDEMWDRAEADLAVALEENNIPFEYQLGEGAFYGPKIEFTLYDCLDRAWQCGTVQLDFSLPSRLSASYVGEDNERKVPVMIHRAILGSMERFIGILTEEFAGFFPTWLAPVQVVIMNITDSQSEYVNELTQKLSNAGIRVKADLRNEKIGFKIREHTLRRVPYMLVCGDKEVESGKVAVRTRRGKDLGSMDVNEVIEKLQQEIRSRSLKQLEE</sequence>
<gene>
    <name evidence="1" type="primary">thrS</name>
    <name type="ordered locus">SF1512</name>
    <name type="ordered locus">S1630</name>
</gene>
<keyword id="KW-0007">Acetylation</keyword>
<keyword id="KW-0030">Aminoacyl-tRNA synthetase</keyword>
<keyword id="KW-0067">ATP-binding</keyword>
<keyword id="KW-0963">Cytoplasm</keyword>
<keyword id="KW-0436">Ligase</keyword>
<keyword id="KW-0479">Metal-binding</keyword>
<keyword id="KW-0547">Nucleotide-binding</keyword>
<keyword id="KW-0648">Protein biosynthesis</keyword>
<keyword id="KW-1185">Reference proteome</keyword>
<keyword id="KW-0694">RNA-binding</keyword>
<keyword id="KW-0820">tRNA-binding</keyword>
<keyword id="KW-0862">Zinc</keyword>
<proteinExistence type="inferred from homology"/>
<evidence type="ECO:0000255" key="1">
    <source>
        <dbReference type="HAMAP-Rule" id="MF_00184"/>
    </source>
</evidence>
<evidence type="ECO:0000255" key="2">
    <source>
        <dbReference type="PROSITE-ProRule" id="PRU01228"/>
    </source>
</evidence>
<protein>
    <recommendedName>
        <fullName evidence="1">Threonine--tRNA ligase</fullName>
        <ecNumber evidence="1">6.1.1.3</ecNumber>
    </recommendedName>
    <alternativeName>
        <fullName evidence="1">Threonyl-tRNA synthetase</fullName>
        <shortName evidence="1">ThrRS</shortName>
    </alternativeName>
</protein>
<comment type="function">
    <text evidence="1">Catalyzes the attachment of threonine to tRNA(Thr) in a two-step reaction: L-threonine is first activated by ATP to form Thr-AMP and then transferred to the acceptor end of tRNA(Thr). Also edits incorrectly charged L-seryl-tRNA(Thr).</text>
</comment>
<comment type="catalytic activity">
    <reaction evidence="1">
        <text>tRNA(Thr) + L-threonine + ATP = L-threonyl-tRNA(Thr) + AMP + diphosphate + H(+)</text>
        <dbReference type="Rhea" id="RHEA:24624"/>
        <dbReference type="Rhea" id="RHEA-COMP:9670"/>
        <dbReference type="Rhea" id="RHEA-COMP:9704"/>
        <dbReference type="ChEBI" id="CHEBI:15378"/>
        <dbReference type="ChEBI" id="CHEBI:30616"/>
        <dbReference type="ChEBI" id="CHEBI:33019"/>
        <dbReference type="ChEBI" id="CHEBI:57926"/>
        <dbReference type="ChEBI" id="CHEBI:78442"/>
        <dbReference type="ChEBI" id="CHEBI:78534"/>
        <dbReference type="ChEBI" id="CHEBI:456215"/>
        <dbReference type="EC" id="6.1.1.3"/>
    </reaction>
</comment>
<comment type="cofactor">
    <cofactor evidence="1">
        <name>Zn(2+)</name>
        <dbReference type="ChEBI" id="CHEBI:29105"/>
    </cofactor>
    <text evidence="1">Binds 1 zinc ion per subunit.</text>
</comment>
<comment type="subunit">
    <text evidence="1">Homodimer.</text>
</comment>
<comment type="subcellular location">
    <subcellularLocation>
        <location evidence="1">Cytoplasm</location>
    </subcellularLocation>
</comment>
<comment type="similarity">
    <text evidence="1">Belongs to the class-II aminoacyl-tRNA synthetase family.</text>
</comment>
<name>SYT_SHIFL</name>
<accession>P0A8M5</accession>
<accession>P00955</accession>
<accession>P78166</accession>
<accession>P78241</accession>
<dbReference type="EC" id="6.1.1.3" evidence="1"/>
<dbReference type="EMBL" id="AE005674">
    <property type="protein sequence ID" value="AAN43102.1"/>
    <property type="molecule type" value="Genomic_DNA"/>
</dbReference>
<dbReference type="EMBL" id="AE014073">
    <property type="protein sequence ID" value="AAP16992.1"/>
    <property type="molecule type" value="Genomic_DNA"/>
</dbReference>
<dbReference type="RefSeq" id="NP_707395.1">
    <property type="nucleotide sequence ID" value="NC_004337.2"/>
</dbReference>
<dbReference type="RefSeq" id="WP_001144202.1">
    <property type="nucleotide sequence ID" value="NZ_WPGW01000051.1"/>
</dbReference>
<dbReference type="SMR" id="P0A8M5"/>
<dbReference type="STRING" id="198214.SF1512"/>
<dbReference type="DrugBank" id="DB03869">
    <property type="generic name" value="5'-O-(L-Serylsulfamoyl)adenosine"/>
</dbReference>
<dbReference type="DrugBank" id="DB03355">
    <property type="generic name" value="5'-O-(L-Threonylsulfamoyl)adenosine"/>
</dbReference>
<dbReference type="DrugBank" id="DB04024">
    <property type="generic name" value="Serine-3'-aminoadenosine"/>
</dbReference>
<dbReference type="PaxDb" id="198214-SF1512"/>
<dbReference type="GeneID" id="1023405"/>
<dbReference type="GeneID" id="93775932"/>
<dbReference type="KEGG" id="sfl:SF1512"/>
<dbReference type="KEGG" id="sfx:S1630"/>
<dbReference type="PATRIC" id="fig|198214.7.peg.1788"/>
<dbReference type="HOGENOM" id="CLU_008554_0_1_6"/>
<dbReference type="Proteomes" id="UP000001006">
    <property type="component" value="Chromosome"/>
</dbReference>
<dbReference type="Proteomes" id="UP000002673">
    <property type="component" value="Chromosome"/>
</dbReference>
<dbReference type="GO" id="GO:0005829">
    <property type="term" value="C:cytosol"/>
    <property type="evidence" value="ECO:0007669"/>
    <property type="project" value="TreeGrafter"/>
</dbReference>
<dbReference type="GO" id="GO:0005524">
    <property type="term" value="F:ATP binding"/>
    <property type="evidence" value="ECO:0007669"/>
    <property type="project" value="UniProtKB-UniRule"/>
</dbReference>
<dbReference type="GO" id="GO:0046872">
    <property type="term" value="F:metal ion binding"/>
    <property type="evidence" value="ECO:0007669"/>
    <property type="project" value="UniProtKB-KW"/>
</dbReference>
<dbReference type="GO" id="GO:0004829">
    <property type="term" value="F:threonine-tRNA ligase activity"/>
    <property type="evidence" value="ECO:0007669"/>
    <property type="project" value="UniProtKB-UniRule"/>
</dbReference>
<dbReference type="GO" id="GO:0000049">
    <property type="term" value="F:tRNA binding"/>
    <property type="evidence" value="ECO:0007669"/>
    <property type="project" value="UniProtKB-KW"/>
</dbReference>
<dbReference type="GO" id="GO:0006435">
    <property type="term" value="P:threonyl-tRNA aminoacylation"/>
    <property type="evidence" value="ECO:0007669"/>
    <property type="project" value="UniProtKB-UniRule"/>
</dbReference>
<dbReference type="CDD" id="cd01667">
    <property type="entry name" value="TGS_ThrRS"/>
    <property type="match status" value="1"/>
</dbReference>
<dbReference type="CDD" id="cd00860">
    <property type="entry name" value="ThrRS_anticodon"/>
    <property type="match status" value="1"/>
</dbReference>
<dbReference type="CDD" id="cd00771">
    <property type="entry name" value="ThrRS_core"/>
    <property type="match status" value="1"/>
</dbReference>
<dbReference type="FunFam" id="3.10.20.30:FF:000005">
    <property type="entry name" value="Threonine--tRNA ligase"/>
    <property type="match status" value="1"/>
</dbReference>
<dbReference type="FunFam" id="3.30.54.20:FF:000002">
    <property type="entry name" value="Threonine--tRNA ligase"/>
    <property type="match status" value="1"/>
</dbReference>
<dbReference type="FunFam" id="3.30.930.10:FF:000002">
    <property type="entry name" value="Threonine--tRNA ligase"/>
    <property type="match status" value="1"/>
</dbReference>
<dbReference type="FunFam" id="3.40.50.800:FF:000001">
    <property type="entry name" value="Threonine--tRNA ligase"/>
    <property type="match status" value="1"/>
</dbReference>
<dbReference type="FunFam" id="3.30.980.10:FF:000005">
    <property type="entry name" value="Threonyl-tRNA synthetase, mitochondrial"/>
    <property type="match status" value="1"/>
</dbReference>
<dbReference type="Gene3D" id="3.10.20.30">
    <property type="match status" value="1"/>
</dbReference>
<dbReference type="Gene3D" id="3.30.54.20">
    <property type="match status" value="1"/>
</dbReference>
<dbReference type="Gene3D" id="3.40.50.800">
    <property type="entry name" value="Anticodon-binding domain"/>
    <property type="match status" value="1"/>
</dbReference>
<dbReference type="Gene3D" id="3.30.930.10">
    <property type="entry name" value="Bira Bifunctional Protein, Domain 2"/>
    <property type="match status" value="1"/>
</dbReference>
<dbReference type="Gene3D" id="3.30.980.10">
    <property type="entry name" value="Threonyl-trna Synthetase, Chain A, domain 2"/>
    <property type="match status" value="1"/>
</dbReference>
<dbReference type="HAMAP" id="MF_00184">
    <property type="entry name" value="Thr_tRNA_synth"/>
    <property type="match status" value="1"/>
</dbReference>
<dbReference type="InterPro" id="IPR002314">
    <property type="entry name" value="aa-tRNA-synt_IIb"/>
</dbReference>
<dbReference type="InterPro" id="IPR006195">
    <property type="entry name" value="aa-tRNA-synth_II"/>
</dbReference>
<dbReference type="InterPro" id="IPR045864">
    <property type="entry name" value="aa-tRNA-synth_II/BPL/LPL"/>
</dbReference>
<dbReference type="InterPro" id="IPR004154">
    <property type="entry name" value="Anticodon-bd"/>
</dbReference>
<dbReference type="InterPro" id="IPR036621">
    <property type="entry name" value="Anticodon-bd_dom_sf"/>
</dbReference>
<dbReference type="InterPro" id="IPR012675">
    <property type="entry name" value="Beta-grasp_dom_sf"/>
</dbReference>
<dbReference type="InterPro" id="IPR004095">
    <property type="entry name" value="TGS"/>
</dbReference>
<dbReference type="InterPro" id="IPR012676">
    <property type="entry name" value="TGS-like"/>
</dbReference>
<dbReference type="InterPro" id="IPR002320">
    <property type="entry name" value="Thr-tRNA-ligase_IIa"/>
</dbReference>
<dbReference type="InterPro" id="IPR018163">
    <property type="entry name" value="Thr/Ala-tRNA-synth_IIc_edit"/>
</dbReference>
<dbReference type="InterPro" id="IPR047246">
    <property type="entry name" value="ThrRS_anticodon"/>
</dbReference>
<dbReference type="InterPro" id="IPR033728">
    <property type="entry name" value="ThrRS_core"/>
</dbReference>
<dbReference type="InterPro" id="IPR012947">
    <property type="entry name" value="tRNA_SAD"/>
</dbReference>
<dbReference type="NCBIfam" id="TIGR00418">
    <property type="entry name" value="thrS"/>
    <property type="match status" value="1"/>
</dbReference>
<dbReference type="PANTHER" id="PTHR11451:SF44">
    <property type="entry name" value="THREONINE--TRNA LIGASE, CHLOROPLASTIC_MITOCHONDRIAL 2"/>
    <property type="match status" value="1"/>
</dbReference>
<dbReference type="PANTHER" id="PTHR11451">
    <property type="entry name" value="THREONINE-TRNA LIGASE"/>
    <property type="match status" value="1"/>
</dbReference>
<dbReference type="Pfam" id="PF03129">
    <property type="entry name" value="HGTP_anticodon"/>
    <property type="match status" value="1"/>
</dbReference>
<dbReference type="Pfam" id="PF02824">
    <property type="entry name" value="TGS"/>
    <property type="match status" value="1"/>
</dbReference>
<dbReference type="Pfam" id="PF00587">
    <property type="entry name" value="tRNA-synt_2b"/>
    <property type="match status" value="1"/>
</dbReference>
<dbReference type="Pfam" id="PF07973">
    <property type="entry name" value="tRNA_SAD"/>
    <property type="match status" value="1"/>
</dbReference>
<dbReference type="PRINTS" id="PR01047">
    <property type="entry name" value="TRNASYNTHTHR"/>
</dbReference>
<dbReference type="SMART" id="SM00863">
    <property type="entry name" value="tRNA_SAD"/>
    <property type="match status" value="1"/>
</dbReference>
<dbReference type="SUPFAM" id="SSF52954">
    <property type="entry name" value="Class II aaRS ABD-related"/>
    <property type="match status" value="1"/>
</dbReference>
<dbReference type="SUPFAM" id="SSF55681">
    <property type="entry name" value="Class II aaRS and biotin synthetases"/>
    <property type="match status" value="1"/>
</dbReference>
<dbReference type="SUPFAM" id="SSF81271">
    <property type="entry name" value="TGS-like"/>
    <property type="match status" value="1"/>
</dbReference>
<dbReference type="SUPFAM" id="SSF55186">
    <property type="entry name" value="ThrRS/AlaRS common domain"/>
    <property type="match status" value="1"/>
</dbReference>
<dbReference type="PROSITE" id="PS50862">
    <property type="entry name" value="AA_TRNA_LIGASE_II"/>
    <property type="match status" value="1"/>
</dbReference>
<dbReference type="PROSITE" id="PS51880">
    <property type="entry name" value="TGS"/>
    <property type="match status" value="1"/>
</dbReference>
<organism>
    <name type="scientific">Shigella flexneri</name>
    <dbReference type="NCBI Taxonomy" id="623"/>
    <lineage>
        <taxon>Bacteria</taxon>
        <taxon>Pseudomonadati</taxon>
        <taxon>Pseudomonadota</taxon>
        <taxon>Gammaproteobacteria</taxon>
        <taxon>Enterobacterales</taxon>
        <taxon>Enterobacteriaceae</taxon>
        <taxon>Shigella</taxon>
    </lineage>
</organism>
<feature type="chain" id="PRO_0000101045" description="Threonine--tRNA ligase">
    <location>
        <begin position="1"/>
        <end position="642"/>
    </location>
</feature>
<feature type="domain" description="TGS" evidence="2">
    <location>
        <begin position="1"/>
        <end position="61"/>
    </location>
</feature>
<feature type="region of interest" description="Catalytic" evidence="1">
    <location>
        <begin position="243"/>
        <end position="534"/>
    </location>
</feature>
<feature type="binding site" evidence="1">
    <location>
        <position position="334"/>
    </location>
    <ligand>
        <name>Zn(2+)</name>
        <dbReference type="ChEBI" id="CHEBI:29105"/>
    </ligand>
</feature>
<feature type="binding site" evidence="1">
    <location>
        <position position="385"/>
    </location>
    <ligand>
        <name>Zn(2+)</name>
        <dbReference type="ChEBI" id="CHEBI:29105"/>
    </ligand>
</feature>
<feature type="binding site" evidence="1">
    <location>
        <position position="511"/>
    </location>
    <ligand>
        <name>Zn(2+)</name>
        <dbReference type="ChEBI" id="CHEBI:29105"/>
    </ligand>
</feature>
<feature type="modified residue" description="N6-acetyllysine" evidence="1">
    <location>
        <position position="286"/>
    </location>
</feature>
<reference key="1">
    <citation type="journal article" date="2002" name="Nucleic Acids Res.">
        <title>Genome sequence of Shigella flexneri 2a: insights into pathogenicity through comparison with genomes of Escherichia coli K12 and O157.</title>
        <authorList>
            <person name="Jin Q."/>
            <person name="Yuan Z."/>
            <person name="Xu J."/>
            <person name="Wang Y."/>
            <person name="Shen Y."/>
            <person name="Lu W."/>
            <person name="Wang J."/>
            <person name="Liu H."/>
            <person name="Yang J."/>
            <person name="Yang F."/>
            <person name="Zhang X."/>
            <person name="Zhang J."/>
            <person name="Yang G."/>
            <person name="Wu H."/>
            <person name="Qu D."/>
            <person name="Dong J."/>
            <person name="Sun L."/>
            <person name="Xue Y."/>
            <person name="Zhao A."/>
            <person name="Gao Y."/>
            <person name="Zhu J."/>
            <person name="Kan B."/>
            <person name="Ding K."/>
            <person name="Chen S."/>
            <person name="Cheng H."/>
            <person name="Yao Z."/>
            <person name="He B."/>
            <person name="Chen R."/>
            <person name="Ma D."/>
            <person name="Qiang B."/>
            <person name="Wen Y."/>
            <person name="Hou Y."/>
            <person name="Yu J."/>
        </authorList>
    </citation>
    <scope>NUCLEOTIDE SEQUENCE [LARGE SCALE GENOMIC DNA]</scope>
    <source>
        <strain>301 / Serotype 2a</strain>
    </source>
</reference>
<reference key="2">
    <citation type="journal article" date="2003" name="Infect. Immun.">
        <title>Complete genome sequence and comparative genomics of Shigella flexneri serotype 2a strain 2457T.</title>
        <authorList>
            <person name="Wei J."/>
            <person name="Goldberg M.B."/>
            <person name="Burland V."/>
            <person name="Venkatesan M.M."/>
            <person name="Deng W."/>
            <person name="Fournier G."/>
            <person name="Mayhew G.F."/>
            <person name="Plunkett G. III"/>
            <person name="Rose D.J."/>
            <person name="Darling A."/>
            <person name="Mau B."/>
            <person name="Perna N.T."/>
            <person name="Payne S.M."/>
            <person name="Runyen-Janecky L.J."/>
            <person name="Zhou S."/>
            <person name="Schwartz D.C."/>
            <person name="Blattner F.R."/>
        </authorList>
    </citation>
    <scope>NUCLEOTIDE SEQUENCE [LARGE SCALE GENOMIC DNA]</scope>
    <source>
        <strain>ATCC 700930 / 2457T / Serotype 2a</strain>
    </source>
</reference>